<gene>
    <name evidence="1" type="primary">pyrF</name>
    <name type="ordered locus">DET0013</name>
</gene>
<organism>
    <name type="scientific">Dehalococcoides mccartyi (strain ATCC BAA-2266 / KCTC 15142 / 195)</name>
    <name type="common">Dehalococcoides ethenogenes (strain 195)</name>
    <dbReference type="NCBI Taxonomy" id="243164"/>
    <lineage>
        <taxon>Bacteria</taxon>
        <taxon>Bacillati</taxon>
        <taxon>Chloroflexota</taxon>
        <taxon>Dehalococcoidia</taxon>
        <taxon>Dehalococcoidales</taxon>
        <taxon>Dehalococcoidaceae</taxon>
        <taxon>Dehalococcoides</taxon>
    </lineage>
</organism>
<name>PYRF_DEHM1</name>
<reference key="1">
    <citation type="journal article" date="2005" name="Science">
        <title>Genome sequence of the PCE-dechlorinating bacterium Dehalococcoides ethenogenes.</title>
        <authorList>
            <person name="Seshadri R."/>
            <person name="Adrian L."/>
            <person name="Fouts D.E."/>
            <person name="Eisen J.A."/>
            <person name="Phillippy A.M."/>
            <person name="Methe B.A."/>
            <person name="Ward N.L."/>
            <person name="Nelson W.C."/>
            <person name="DeBoy R.T."/>
            <person name="Khouri H.M."/>
            <person name="Kolonay J.F."/>
            <person name="Dodson R.J."/>
            <person name="Daugherty S.C."/>
            <person name="Brinkac L.M."/>
            <person name="Sullivan S.A."/>
            <person name="Madupu R."/>
            <person name="Nelson K.E."/>
            <person name="Kang K.H."/>
            <person name="Impraim M."/>
            <person name="Tran K."/>
            <person name="Robinson J.M."/>
            <person name="Forberger H.A."/>
            <person name="Fraser C.M."/>
            <person name="Zinder S.H."/>
            <person name="Heidelberg J.F."/>
        </authorList>
    </citation>
    <scope>NUCLEOTIDE SEQUENCE [LARGE SCALE GENOMIC DNA]</scope>
    <source>
        <strain>ATCC BAA-2266 / KCTC 15142 / 195</strain>
    </source>
</reference>
<accession>Q3ZAI1</accession>
<proteinExistence type="inferred from homology"/>
<comment type="catalytic activity">
    <reaction evidence="1">
        <text>orotidine 5'-phosphate + H(+) = UMP + CO2</text>
        <dbReference type="Rhea" id="RHEA:11596"/>
        <dbReference type="ChEBI" id="CHEBI:15378"/>
        <dbReference type="ChEBI" id="CHEBI:16526"/>
        <dbReference type="ChEBI" id="CHEBI:57538"/>
        <dbReference type="ChEBI" id="CHEBI:57865"/>
        <dbReference type="EC" id="4.1.1.23"/>
    </reaction>
</comment>
<comment type="pathway">
    <text evidence="1">Pyrimidine metabolism; UMP biosynthesis via de novo pathway; UMP from orotate: step 2/2.</text>
</comment>
<comment type="similarity">
    <text evidence="1">Belongs to the OMP decarboxylase family. Type 2 subfamily.</text>
</comment>
<feature type="chain" id="PRO_1000066470" description="Orotidine 5'-phosphate decarboxylase">
    <location>
        <begin position="1"/>
        <end position="270"/>
    </location>
</feature>
<feature type="active site" description="Proton donor" evidence="1">
    <location>
        <position position="89"/>
    </location>
</feature>
<protein>
    <recommendedName>
        <fullName evidence="1">Orotidine 5'-phosphate decarboxylase</fullName>
        <ecNumber evidence="1">4.1.1.23</ecNumber>
    </recommendedName>
    <alternativeName>
        <fullName evidence="1">OMP decarboxylase</fullName>
        <shortName evidence="1">OMPDCase</shortName>
        <shortName evidence="1">OMPdecase</shortName>
    </alternativeName>
</protein>
<dbReference type="EC" id="4.1.1.23" evidence="1"/>
<dbReference type="EMBL" id="CP000027">
    <property type="protein sequence ID" value="AAW39163.1"/>
    <property type="molecule type" value="Genomic_DNA"/>
</dbReference>
<dbReference type="RefSeq" id="WP_010935823.1">
    <property type="nucleotide sequence ID" value="NC_002936.3"/>
</dbReference>
<dbReference type="SMR" id="Q3ZAI1"/>
<dbReference type="STRING" id="243164.DET0013"/>
<dbReference type="GeneID" id="3229121"/>
<dbReference type="KEGG" id="det:DET0013"/>
<dbReference type="PATRIC" id="fig|243164.10.peg.12"/>
<dbReference type="eggNOG" id="COG0284">
    <property type="taxonomic scope" value="Bacteria"/>
</dbReference>
<dbReference type="HOGENOM" id="CLU_060704_1_0_0"/>
<dbReference type="InParanoid" id="Q3ZAI1"/>
<dbReference type="UniPathway" id="UPA00070">
    <property type="reaction ID" value="UER00120"/>
</dbReference>
<dbReference type="Proteomes" id="UP000008289">
    <property type="component" value="Chromosome"/>
</dbReference>
<dbReference type="GO" id="GO:0004590">
    <property type="term" value="F:orotidine-5'-phosphate decarboxylase activity"/>
    <property type="evidence" value="ECO:0007669"/>
    <property type="project" value="UniProtKB-UniRule"/>
</dbReference>
<dbReference type="GO" id="GO:0006207">
    <property type="term" value="P:'de novo' pyrimidine nucleobase biosynthetic process"/>
    <property type="evidence" value="ECO:0007669"/>
    <property type="project" value="InterPro"/>
</dbReference>
<dbReference type="GO" id="GO:0044205">
    <property type="term" value="P:'de novo' UMP biosynthetic process"/>
    <property type="evidence" value="ECO:0007669"/>
    <property type="project" value="UniProtKB-UniRule"/>
</dbReference>
<dbReference type="CDD" id="cd04725">
    <property type="entry name" value="OMP_decarboxylase_like"/>
    <property type="match status" value="1"/>
</dbReference>
<dbReference type="FunFam" id="3.20.20.70:FF:000157">
    <property type="entry name" value="Orotidine 5'-phosphate decarboxylase"/>
    <property type="match status" value="1"/>
</dbReference>
<dbReference type="Gene3D" id="3.20.20.70">
    <property type="entry name" value="Aldolase class I"/>
    <property type="match status" value="1"/>
</dbReference>
<dbReference type="HAMAP" id="MF_01215">
    <property type="entry name" value="OMPdecase_type2"/>
    <property type="match status" value="1"/>
</dbReference>
<dbReference type="InterPro" id="IPR013785">
    <property type="entry name" value="Aldolase_TIM"/>
</dbReference>
<dbReference type="InterPro" id="IPR011995">
    <property type="entry name" value="OMPdecase_type-2"/>
</dbReference>
<dbReference type="InterPro" id="IPR001754">
    <property type="entry name" value="OMPdeCOase_dom"/>
</dbReference>
<dbReference type="InterPro" id="IPR011060">
    <property type="entry name" value="RibuloseP-bd_barrel"/>
</dbReference>
<dbReference type="NCBIfam" id="TIGR02127">
    <property type="entry name" value="pyrF_sub2"/>
    <property type="match status" value="1"/>
</dbReference>
<dbReference type="PANTHER" id="PTHR43375">
    <property type="entry name" value="OROTIDINE 5'-PHOSPHATE DECARBOXYLASE"/>
    <property type="match status" value="1"/>
</dbReference>
<dbReference type="PANTHER" id="PTHR43375:SF1">
    <property type="entry name" value="OROTIDINE 5'-PHOSPHATE DECARBOXYLASE"/>
    <property type="match status" value="1"/>
</dbReference>
<dbReference type="Pfam" id="PF00215">
    <property type="entry name" value="OMPdecase"/>
    <property type="match status" value="1"/>
</dbReference>
<dbReference type="SMART" id="SM00934">
    <property type="entry name" value="OMPdecase"/>
    <property type="match status" value="1"/>
</dbReference>
<dbReference type="SUPFAM" id="SSF51366">
    <property type="entry name" value="Ribulose-phoshate binding barrel"/>
    <property type="match status" value="1"/>
</dbReference>
<evidence type="ECO:0000255" key="1">
    <source>
        <dbReference type="HAMAP-Rule" id="MF_01215"/>
    </source>
</evidence>
<sequence length="270" mass="29786">MKFLEKLKQAGNSHNSLLCVGLDPDPKLMPVGMTALEFNREIIAATAPFVCGYKINLAFYEALGKQGWEILSETCKLIPPELLSIADAKRGDIGNTSKAYARAVFDELGCDGVTASPYLGYDSLEPFIEYQDKGIFILCRTSNQGSADFQMLKTEYLGQKRFLYEVVADKSLQWNRYENIGLVVGATQQEELKKLRLSYPKMPFLIPGIGAQGGDLKATVENGTNQSGQLALICASRGILYARSGSEFAQGAAEAAKQMRDAINHYRKRF</sequence>
<keyword id="KW-0210">Decarboxylase</keyword>
<keyword id="KW-0456">Lyase</keyword>
<keyword id="KW-0665">Pyrimidine biosynthesis</keyword>